<accession>Q04521</accession>
<organism>
    <name type="scientific">Saccharomyces cerevisiae (strain ATCC 204508 / S288c)</name>
    <name type="common">Baker's yeast</name>
    <dbReference type="NCBI Taxonomy" id="559292"/>
    <lineage>
        <taxon>Eukaryota</taxon>
        <taxon>Fungi</taxon>
        <taxon>Dikarya</taxon>
        <taxon>Ascomycota</taxon>
        <taxon>Saccharomycotina</taxon>
        <taxon>Saccharomycetes</taxon>
        <taxon>Saccharomycetales</taxon>
        <taxon>Saccharomycetaceae</taxon>
        <taxon>Saccharomyces</taxon>
    </lineage>
</organism>
<reference key="1">
    <citation type="journal article" date="1997" name="Nature">
        <title>The nucleotide sequence of Saccharomyces cerevisiae chromosome XIII.</title>
        <authorList>
            <person name="Bowman S."/>
            <person name="Churcher C.M."/>
            <person name="Badcock K."/>
            <person name="Brown D."/>
            <person name="Chillingworth T."/>
            <person name="Connor R."/>
            <person name="Dedman K."/>
            <person name="Devlin K."/>
            <person name="Gentles S."/>
            <person name="Hamlin N."/>
            <person name="Hunt S."/>
            <person name="Jagels K."/>
            <person name="Lye G."/>
            <person name="Moule S."/>
            <person name="Odell C."/>
            <person name="Pearson D."/>
            <person name="Rajandream M.A."/>
            <person name="Rice P."/>
            <person name="Skelton J."/>
            <person name="Walsh S.V."/>
            <person name="Whitehead S."/>
            <person name="Barrell B.G."/>
        </authorList>
    </citation>
    <scope>NUCLEOTIDE SEQUENCE [LARGE SCALE GENOMIC DNA]</scope>
    <source>
        <strain>ATCC 204508 / S288c</strain>
    </source>
</reference>
<reference key="2">
    <citation type="journal article" date="2014" name="G3 (Bethesda)">
        <title>The reference genome sequence of Saccharomyces cerevisiae: Then and now.</title>
        <authorList>
            <person name="Engel S.R."/>
            <person name="Dietrich F.S."/>
            <person name="Fisk D.G."/>
            <person name="Binkley G."/>
            <person name="Balakrishnan R."/>
            <person name="Costanzo M.C."/>
            <person name="Dwight S.S."/>
            <person name="Hitz B.C."/>
            <person name="Karra K."/>
            <person name="Nash R.S."/>
            <person name="Weng S."/>
            <person name="Wong E.D."/>
            <person name="Lloyd P."/>
            <person name="Skrzypek M.S."/>
            <person name="Miyasato S.R."/>
            <person name="Simison M."/>
            <person name="Cherry J.M."/>
        </authorList>
    </citation>
    <scope>GENOME REANNOTATION</scope>
    <source>
        <strain>ATCC 204508 / S288c</strain>
    </source>
</reference>
<dbReference type="EMBL" id="Z46660">
    <property type="protein sequence ID" value="CAA86654.1"/>
    <property type="molecule type" value="Genomic_DNA"/>
</dbReference>
<dbReference type="PIR" id="S49642">
    <property type="entry name" value="S49642"/>
</dbReference>
<dbReference type="STRING" id="4932.YML084W"/>
<dbReference type="PaxDb" id="4932-YML084W"/>
<dbReference type="EnsemblFungi" id="YML084W_mRNA">
    <property type="protein sequence ID" value="YML084W"/>
    <property type="gene ID" value="YML084W"/>
</dbReference>
<dbReference type="AGR" id="SGD:S000004549"/>
<dbReference type="SGD" id="S000004549">
    <property type="gene designation" value="YML084W"/>
</dbReference>
<dbReference type="HOGENOM" id="CLU_2308250_0_0_1"/>
<sequence>MFLFCFVLFCSLVFPLARGVFAWHNPAGNYGDIIVWHIYIYIYVNYTYINSFRSSYYSLTINGSTISLLKKYFLLQDLKQSVIMEKVCNCVFLKKDTDIYIC</sequence>
<comment type="caution">
    <text evidence="2">Product of a dubious gene prediction unlikely to encode a functional protein. Because of that it is not part of the S.cerevisiae S288c complete/reference proteome set.</text>
</comment>
<evidence type="ECO:0000255" key="1"/>
<evidence type="ECO:0000305" key="2">
    <source>
    </source>
</evidence>
<keyword id="KW-0732">Signal</keyword>
<protein>
    <recommendedName>
        <fullName>Putative uncharacterized protein YML084W</fullName>
    </recommendedName>
</protein>
<gene>
    <name type="ordered locus">YML084W</name>
</gene>
<feature type="signal peptide" evidence="1">
    <location>
        <begin position="1"/>
        <end position="19"/>
    </location>
</feature>
<feature type="chain" id="PRO_0000014337" description="Putative uncharacterized protein YML084W">
    <location>
        <begin position="20"/>
        <end position="102"/>
    </location>
</feature>
<name>YMI4_YEAST</name>
<proteinExistence type="uncertain"/>